<reference key="1">
    <citation type="journal article" date="2006" name="Proc. Natl. Acad. Sci. U.S.A.">
        <title>Genome reduction in Leptospira borgpetersenii reflects limited transmission potential.</title>
        <authorList>
            <person name="Bulach D.M."/>
            <person name="Zuerner R.L."/>
            <person name="Wilson P."/>
            <person name="Seemann T."/>
            <person name="McGrath A."/>
            <person name="Cullen P.A."/>
            <person name="Davis J."/>
            <person name="Johnson M."/>
            <person name="Kuczek E."/>
            <person name="Alt D.P."/>
            <person name="Peterson-Burch B."/>
            <person name="Coppel R.L."/>
            <person name="Rood J.I."/>
            <person name="Davies J.K."/>
            <person name="Adler B."/>
        </authorList>
    </citation>
    <scope>NUCLEOTIDE SEQUENCE [LARGE SCALE GENOMIC DNA]</scope>
    <source>
        <strain>JB197</strain>
    </source>
</reference>
<proteinExistence type="inferred from homology"/>
<evidence type="ECO:0000255" key="1">
    <source>
        <dbReference type="HAMAP-Rule" id="MF_00639"/>
    </source>
</evidence>
<comment type="function">
    <text evidence="1">Cell wall formation. Catalyzes the addition of glutamate to the nucleotide precursor UDP-N-acetylmuramoyl-L-alanine (UMA).</text>
</comment>
<comment type="catalytic activity">
    <reaction evidence="1">
        <text>UDP-N-acetyl-alpha-D-muramoyl-L-alanine + D-glutamate + ATP = UDP-N-acetyl-alpha-D-muramoyl-L-alanyl-D-glutamate + ADP + phosphate + H(+)</text>
        <dbReference type="Rhea" id="RHEA:16429"/>
        <dbReference type="ChEBI" id="CHEBI:15378"/>
        <dbReference type="ChEBI" id="CHEBI:29986"/>
        <dbReference type="ChEBI" id="CHEBI:30616"/>
        <dbReference type="ChEBI" id="CHEBI:43474"/>
        <dbReference type="ChEBI" id="CHEBI:83898"/>
        <dbReference type="ChEBI" id="CHEBI:83900"/>
        <dbReference type="ChEBI" id="CHEBI:456216"/>
        <dbReference type="EC" id="6.3.2.9"/>
    </reaction>
</comment>
<comment type="pathway">
    <text evidence="1">Cell wall biogenesis; peptidoglycan biosynthesis.</text>
</comment>
<comment type="subcellular location">
    <subcellularLocation>
        <location evidence="1">Cytoplasm</location>
    </subcellularLocation>
</comment>
<comment type="similarity">
    <text evidence="1">Belongs to the MurCDEF family.</text>
</comment>
<feature type="chain" id="PRO_0000301434" description="UDP-N-acetylmuramoylalanine--D-glutamate ligase">
    <location>
        <begin position="1"/>
        <end position="462"/>
    </location>
</feature>
<feature type="binding site" evidence="1">
    <location>
        <begin position="109"/>
        <end position="115"/>
    </location>
    <ligand>
        <name>ATP</name>
        <dbReference type="ChEBI" id="CHEBI:30616"/>
    </ligand>
</feature>
<name>MURD_LEPBJ</name>
<gene>
    <name evidence="1" type="primary">murD</name>
    <name type="ordered locus">LBJ_0789</name>
</gene>
<protein>
    <recommendedName>
        <fullName evidence="1">UDP-N-acetylmuramoylalanine--D-glutamate ligase</fullName>
        <ecNumber evidence="1">6.3.2.9</ecNumber>
    </recommendedName>
    <alternativeName>
        <fullName evidence="1">D-glutamic acid-adding enzyme</fullName>
    </alternativeName>
    <alternativeName>
        <fullName evidence="1">UDP-N-acetylmuramoyl-L-alanyl-D-glutamate synthetase</fullName>
    </alternativeName>
</protein>
<dbReference type="EC" id="6.3.2.9" evidence="1"/>
<dbReference type="EMBL" id="CP000350">
    <property type="protein sequence ID" value="ABJ75454.1"/>
    <property type="molecule type" value="Genomic_DNA"/>
</dbReference>
<dbReference type="RefSeq" id="WP_011670694.1">
    <property type="nucleotide sequence ID" value="NC_008510.1"/>
</dbReference>
<dbReference type="SMR" id="Q04UG6"/>
<dbReference type="KEGG" id="lbj:LBJ_0789"/>
<dbReference type="HOGENOM" id="CLU_032540_1_0_12"/>
<dbReference type="UniPathway" id="UPA00219"/>
<dbReference type="Proteomes" id="UP000000656">
    <property type="component" value="Chromosome 1"/>
</dbReference>
<dbReference type="GO" id="GO:0005737">
    <property type="term" value="C:cytoplasm"/>
    <property type="evidence" value="ECO:0007669"/>
    <property type="project" value="UniProtKB-SubCell"/>
</dbReference>
<dbReference type="GO" id="GO:0005524">
    <property type="term" value="F:ATP binding"/>
    <property type="evidence" value="ECO:0007669"/>
    <property type="project" value="UniProtKB-UniRule"/>
</dbReference>
<dbReference type="GO" id="GO:0008764">
    <property type="term" value="F:UDP-N-acetylmuramoylalanine-D-glutamate ligase activity"/>
    <property type="evidence" value="ECO:0007669"/>
    <property type="project" value="UniProtKB-UniRule"/>
</dbReference>
<dbReference type="GO" id="GO:0051301">
    <property type="term" value="P:cell division"/>
    <property type="evidence" value="ECO:0007669"/>
    <property type="project" value="UniProtKB-KW"/>
</dbReference>
<dbReference type="GO" id="GO:0071555">
    <property type="term" value="P:cell wall organization"/>
    <property type="evidence" value="ECO:0007669"/>
    <property type="project" value="UniProtKB-KW"/>
</dbReference>
<dbReference type="GO" id="GO:0009252">
    <property type="term" value="P:peptidoglycan biosynthetic process"/>
    <property type="evidence" value="ECO:0007669"/>
    <property type="project" value="UniProtKB-UniRule"/>
</dbReference>
<dbReference type="GO" id="GO:0008360">
    <property type="term" value="P:regulation of cell shape"/>
    <property type="evidence" value="ECO:0007669"/>
    <property type="project" value="UniProtKB-KW"/>
</dbReference>
<dbReference type="Gene3D" id="3.90.190.20">
    <property type="entry name" value="Mur ligase, C-terminal domain"/>
    <property type="match status" value="1"/>
</dbReference>
<dbReference type="Gene3D" id="3.40.1190.10">
    <property type="entry name" value="Mur-like, catalytic domain"/>
    <property type="match status" value="1"/>
</dbReference>
<dbReference type="Gene3D" id="3.40.50.720">
    <property type="entry name" value="NAD(P)-binding Rossmann-like Domain"/>
    <property type="match status" value="1"/>
</dbReference>
<dbReference type="HAMAP" id="MF_00639">
    <property type="entry name" value="MurD"/>
    <property type="match status" value="1"/>
</dbReference>
<dbReference type="InterPro" id="IPR036565">
    <property type="entry name" value="Mur-like_cat_sf"/>
</dbReference>
<dbReference type="InterPro" id="IPR036615">
    <property type="entry name" value="Mur_ligase_C_dom_sf"/>
</dbReference>
<dbReference type="InterPro" id="IPR013221">
    <property type="entry name" value="Mur_ligase_cen"/>
</dbReference>
<dbReference type="InterPro" id="IPR005762">
    <property type="entry name" value="MurD"/>
</dbReference>
<dbReference type="NCBIfam" id="TIGR01087">
    <property type="entry name" value="murD"/>
    <property type="match status" value="1"/>
</dbReference>
<dbReference type="PANTHER" id="PTHR43692">
    <property type="entry name" value="UDP-N-ACETYLMURAMOYLALANINE--D-GLUTAMATE LIGASE"/>
    <property type="match status" value="1"/>
</dbReference>
<dbReference type="PANTHER" id="PTHR43692:SF1">
    <property type="entry name" value="UDP-N-ACETYLMURAMOYLALANINE--D-GLUTAMATE LIGASE"/>
    <property type="match status" value="1"/>
</dbReference>
<dbReference type="Pfam" id="PF08245">
    <property type="entry name" value="Mur_ligase_M"/>
    <property type="match status" value="1"/>
</dbReference>
<dbReference type="Pfam" id="PF21799">
    <property type="entry name" value="MurD-like_N"/>
    <property type="match status" value="1"/>
</dbReference>
<dbReference type="SUPFAM" id="SSF51984">
    <property type="entry name" value="MurCD N-terminal domain"/>
    <property type="match status" value="1"/>
</dbReference>
<dbReference type="SUPFAM" id="SSF53623">
    <property type="entry name" value="MurD-like peptide ligases, catalytic domain"/>
    <property type="match status" value="1"/>
</dbReference>
<dbReference type="SUPFAM" id="SSF53244">
    <property type="entry name" value="MurD-like peptide ligases, peptide-binding domain"/>
    <property type="match status" value="1"/>
</dbReference>
<accession>Q04UG6</accession>
<organism>
    <name type="scientific">Leptospira borgpetersenii serovar Hardjo-bovis (strain JB197)</name>
    <dbReference type="NCBI Taxonomy" id="355277"/>
    <lineage>
        <taxon>Bacteria</taxon>
        <taxon>Pseudomonadati</taxon>
        <taxon>Spirochaetota</taxon>
        <taxon>Spirochaetia</taxon>
        <taxon>Leptospirales</taxon>
        <taxon>Leptospiraceae</taxon>
        <taxon>Leptospira</taxon>
    </lineage>
</organism>
<keyword id="KW-0067">ATP-binding</keyword>
<keyword id="KW-0131">Cell cycle</keyword>
<keyword id="KW-0132">Cell division</keyword>
<keyword id="KW-0133">Cell shape</keyword>
<keyword id="KW-0961">Cell wall biogenesis/degradation</keyword>
<keyword id="KW-0963">Cytoplasm</keyword>
<keyword id="KW-0436">Ligase</keyword>
<keyword id="KW-0547">Nucleotide-binding</keyword>
<keyword id="KW-0573">Peptidoglycan synthesis</keyword>
<sequence>MKFPESLKGLKILVLGGGISGNSALDFLISEEAQPILCDRNQPETISVPFFHDNIDPRSFFEISLIIKSPGILPTHPILSYAVEKKIPVFSEIDLGRFFFKGKIIGITGTDGKSTTTSLVAHLLKKDFSDLKEGGNLGIPFTSFCKEPISLAVLELSSYQLEDSSPLDLNVSVFLNLAPDHLERHETMENYFRAKLKIADLQNPNHSLIVSEKIREKILNSTSVQCKLLSFGRATTSEAILDESSSEIRTSKFIYDISRFYLPGTHNRENLAAAILASEAIGGKPESIQAQIPFFMGLPHRFQIAGEKRGISFINDSKSTNLHSMLAGMSAWKNLDRTCLILGGRPKQEDPKPLYDFLMRGIGCVVLIGEARSVWEKGIRNVIGEKLFSVENLDEAFKIFKKWNVISESPEIRKIRLSSEITISYFVFSPACVSFDQYKNFEERGNHFLSLVEDFLNNASWT</sequence>